<feature type="chain" id="PRO_0000345187" description="Protein PEROXIN-4">
    <location>
        <begin position="1"/>
        <end position="157"/>
    </location>
</feature>
<feature type="domain" description="UBC core" evidence="3">
    <location>
        <begin position="3"/>
        <end position="153"/>
    </location>
</feature>
<feature type="active site" description="Glycyl thioester intermediate" evidence="3 4">
    <location>
        <position position="90"/>
    </location>
</feature>
<feature type="mutagenesis site" description="In pex4-1; reduced peroxisomal function and loss of response to indole-3-butyric acid." evidence="5">
    <original>P</original>
    <variation>L</variation>
    <location>
        <position position="123"/>
    </location>
</feature>
<feature type="helix" evidence="8">
    <location>
        <begin position="2"/>
        <end position="16"/>
    </location>
</feature>
<feature type="strand" evidence="8">
    <location>
        <begin position="25"/>
        <end position="29"/>
    </location>
</feature>
<feature type="strand" evidence="8">
    <location>
        <begin position="36"/>
        <end position="42"/>
    </location>
</feature>
<feature type="turn" evidence="8">
    <location>
        <begin position="48"/>
        <end position="51"/>
    </location>
</feature>
<feature type="strand" evidence="8">
    <location>
        <begin position="53"/>
        <end position="59"/>
    </location>
</feature>
<feature type="turn" evidence="8">
    <location>
        <begin position="62"/>
        <end position="65"/>
    </location>
</feature>
<feature type="strand" evidence="8">
    <location>
        <begin position="70"/>
        <end position="75"/>
    </location>
</feature>
<feature type="turn" evidence="8">
    <location>
        <begin position="84"/>
        <end position="86"/>
    </location>
</feature>
<feature type="helix" evidence="8">
    <location>
        <begin position="92"/>
        <end position="94"/>
    </location>
</feature>
<feature type="helix" evidence="8">
    <location>
        <begin position="104"/>
        <end position="116"/>
    </location>
</feature>
<feature type="strand" evidence="8">
    <location>
        <begin position="120"/>
        <end position="122"/>
    </location>
</feature>
<feature type="helix" evidence="8">
    <location>
        <begin position="126"/>
        <end position="133"/>
    </location>
</feature>
<feature type="helix" evidence="8">
    <location>
        <begin position="137"/>
        <end position="151"/>
    </location>
</feature>
<keyword id="KW-0002">3D-structure</keyword>
<keyword id="KW-0067">ATP-binding</keyword>
<keyword id="KW-0472">Membrane</keyword>
<keyword id="KW-0547">Nucleotide-binding</keyword>
<keyword id="KW-0576">Peroxisome</keyword>
<keyword id="KW-0962">Peroxisome biogenesis</keyword>
<keyword id="KW-0653">Protein transport</keyword>
<keyword id="KW-1185">Reference proteome</keyword>
<keyword id="KW-0808">Transferase</keyword>
<keyword id="KW-0813">Transport</keyword>
<keyword id="KW-0833">Ubl conjugation pathway</keyword>
<comment type="function">
    <text evidence="1 6 7">Required for peroxisome biogenesis. Necessary for the developmental elimination of obsolete peroxisome matrix proteins. May be involved in the ubiquitination of PEX5, targeting it for recycling. Accepts the ubiquitin from the E1 complex and catalyzes its covalent attachment to other proteins.</text>
</comment>
<comment type="catalytic activity">
    <reaction evidence="3 4">
        <text>S-ubiquitinyl-[E1 ubiquitin-activating enzyme]-L-cysteine + [E2 ubiquitin-conjugating enzyme]-L-cysteine = [E1 ubiquitin-activating enzyme]-L-cysteine + S-ubiquitinyl-[E2 ubiquitin-conjugating enzyme]-L-cysteine.</text>
        <dbReference type="EC" id="2.3.2.23"/>
    </reaction>
</comment>
<comment type="pathway">
    <text evidence="3">Protein modification; protein ubiquitination.</text>
</comment>
<comment type="subunit">
    <text evidence="5">Interacts with PEX22.</text>
</comment>
<comment type="subcellular location">
    <subcellularLocation>
        <location evidence="2">Peroxisome membrane</location>
        <topology evidence="1">Peripheral membrane protein</topology>
    </subcellularLocation>
</comment>
<comment type="similarity">
    <text evidence="3">Belongs to the ubiquitin-conjugating enzyme family.</text>
</comment>
<dbReference type="EC" id="2.3.2.23"/>
<dbReference type="EMBL" id="DQ027035">
    <property type="protein sequence ID" value="AAY44861.1"/>
    <property type="molecule type" value="mRNA"/>
</dbReference>
<dbReference type="EMBL" id="AC005405">
    <property type="status" value="NOT_ANNOTATED_CDS"/>
    <property type="molecule type" value="Genomic_DNA"/>
</dbReference>
<dbReference type="EMBL" id="CP002688">
    <property type="protein sequence ID" value="AED93482.1"/>
    <property type="molecule type" value="Genomic_DNA"/>
</dbReference>
<dbReference type="EMBL" id="CP002688">
    <property type="protein sequence ID" value="AED93483.1"/>
    <property type="molecule type" value="Genomic_DNA"/>
</dbReference>
<dbReference type="EMBL" id="AY084297">
    <property type="protein sequence ID" value="AAM60888.1"/>
    <property type="molecule type" value="mRNA"/>
</dbReference>
<dbReference type="EMBL" id="BT025616">
    <property type="protein sequence ID" value="ABF59034.1"/>
    <property type="molecule type" value="mRNA"/>
</dbReference>
<dbReference type="RefSeq" id="NP_001031939.1">
    <property type="nucleotide sequence ID" value="NM_001036862.2"/>
</dbReference>
<dbReference type="RefSeq" id="NP_568476.1">
    <property type="nucleotide sequence ID" value="NM_122477.2"/>
</dbReference>
<dbReference type="PDB" id="6XOD">
    <property type="method" value="X-ray"/>
    <property type="resolution" value="2.01 A"/>
    <property type="chains" value="A=1-157"/>
</dbReference>
<dbReference type="PDBsum" id="6XOD"/>
<dbReference type="SMR" id="Q8LGF7"/>
<dbReference type="BioGRID" id="17920">
    <property type="interactions" value="1"/>
</dbReference>
<dbReference type="FunCoup" id="Q8LGF7">
    <property type="interactions" value="1006"/>
</dbReference>
<dbReference type="IntAct" id="Q8LGF7">
    <property type="interactions" value="1"/>
</dbReference>
<dbReference type="STRING" id="3702.Q8LGF7"/>
<dbReference type="PaxDb" id="3702-AT5G25760.2"/>
<dbReference type="ProteomicsDB" id="251199"/>
<dbReference type="EnsemblPlants" id="AT5G25760.1">
    <property type="protein sequence ID" value="AT5G25760.1"/>
    <property type="gene ID" value="AT5G25760"/>
</dbReference>
<dbReference type="EnsemblPlants" id="AT5G25760.2">
    <property type="protein sequence ID" value="AT5G25760.2"/>
    <property type="gene ID" value="AT5G25760"/>
</dbReference>
<dbReference type="GeneID" id="832645"/>
<dbReference type="Gramene" id="AT5G25760.1">
    <property type="protein sequence ID" value="AT5G25760.1"/>
    <property type="gene ID" value="AT5G25760"/>
</dbReference>
<dbReference type="Gramene" id="AT5G25760.2">
    <property type="protein sequence ID" value="AT5G25760.2"/>
    <property type="gene ID" value="AT5G25760"/>
</dbReference>
<dbReference type="KEGG" id="ath:AT5G25760"/>
<dbReference type="Araport" id="AT5G25760"/>
<dbReference type="TAIR" id="AT5G25760">
    <property type="gene designation" value="PEX4"/>
</dbReference>
<dbReference type="eggNOG" id="KOG0417">
    <property type="taxonomic scope" value="Eukaryota"/>
</dbReference>
<dbReference type="HOGENOM" id="CLU_030988_13_0_1"/>
<dbReference type="InParanoid" id="Q8LGF7"/>
<dbReference type="OMA" id="WRAVMKG"/>
<dbReference type="PhylomeDB" id="Q8LGF7"/>
<dbReference type="UniPathway" id="UPA00143"/>
<dbReference type="PRO" id="PR:Q8LGF7"/>
<dbReference type="Proteomes" id="UP000006548">
    <property type="component" value="Chromosome 5"/>
</dbReference>
<dbReference type="ExpressionAtlas" id="Q8LGF7">
    <property type="expression patterns" value="baseline and differential"/>
</dbReference>
<dbReference type="GO" id="GO:0005778">
    <property type="term" value="C:peroxisomal membrane"/>
    <property type="evidence" value="ECO:0007669"/>
    <property type="project" value="UniProtKB-SubCell"/>
</dbReference>
<dbReference type="GO" id="GO:0005524">
    <property type="term" value="F:ATP binding"/>
    <property type="evidence" value="ECO:0007669"/>
    <property type="project" value="UniProtKB-KW"/>
</dbReference>
<dbReference type="GO" id="GO:0061631">
    <property type="term" value="F:ubiquitin conjugating enzyme activity"/>
    <property type="evidence" value="ECO:0007669"/>
    <property type="project" value="UniProtKB-EC"/>
</dbReference>
<dbReference type="GO" id="GO:0004842">
    <property type="term" value="F:ubiquitin-protein transferase activity"/>
    <property type="evidence" value="ECO:0000250"/>
    <property type="project" value="TAIR"/>
</dbReference>
<dbReference type="GO" id="GO:0006635">
    <property type="term" value="P:fatty acid beta-oxidation"/>
    <property type="evidence" value="ECO:0000315"/>
    <property type="project" value="TAIR"/>
</dbReference>
<dbReference type="GO" id="GO:0007031">
    <property type="term" value="P:peroxisome organization"/>
    <property type="evidence" value="ECO:0000315"/>
    <property type="project" value="TAIR"/>
</dbReference>
<dbReference type="GO" id="GO:0016558">
    <property type="term" value="P:protein import into peroxisome matrix"/>
    <property type="evidence" value="ECO:0000315"/>
    <property type="project" value="TAIR"/>
</dbReference>
<dbReference type="GO" id="GO:0016567">
    <property type="term" value="P:protein ubiquitination"/>
    <property type="evidence" value="ECO:0000314"/>
    <property type="project" value="TAIR"/>
</dbReference>
<dbReference type="CDD" id="cd23812">
    <property type="entry name" value="UBCc_ScPEX4-like"/>
    <property type="match status" value="1"/>
</dbReference>
<dbReference type="FunFam" id="3.10.110.10:FF:000044">
    <property type="entry name" value="protein PEROXIN-4 isoform X1"/>
    <property type="match status" value="1"/>
</dbReference>
<dbReference type="Gene3D" id="3.10.110.10">
    <property type="entry name" value="Ubiquitin Conjugating Enzyme"/>
    <property type="match status" value="1"/>
</dbReference>
<dbReference type="InterPro" id="IPR050113">
    <property type="entry name" value="Ub_conjugating_enzyme"/>
</dbReference>
<dbReference type="InterPro" id="IPR000608">
    <property type="entry name" value="UBQ-conjugat_E2_core"/>
</dbReference>
<dbReference type="InterPro" id="IPR023313">
    <property type="entry name" value="UBQ-conjugating_AS"/>
</dbReference>
<dbReference type="InterPro" id="IPR016135">
    <property type="entry name" value="UBQ-conjugating_enzyme/RWD"/>
</dbReference>
<dbReference type="PANTHER" id="PTHR24067">
    <property type="entry name" value="UBIQUITIN-CONJUGATING ENZYME E2"/>
    <property type="match status" value="1"/>
</dbReference>
<dbReference type="Pfam" id="PF00179">
    <property type="entry name" value="UQ_con"/>
    <property type="match status" value="1"/>
</dbReference>
<dbReference type="SMART" id="SM00212">
    <property type="entry name" value="UBCc"/>
    <property type="match status" value="1"/>
</dbReference>
<dbReference type="SUPFAM" id="SSF54495">
    <property type="entry name" value="UBC-like"/>
    <property type="match status" value="1"/>
</dbReference>
<dbReference type="PROSITE" id="PS00183">
    <property type="entry name" value="UBC_1"/>
    <property type="match status" value="1"/>
</dbReference>
<dbReference type="PROSITE" id="PS50127">
    <property type="entry name" value="UBC_2"/>
    <property type="match status" value="1"/>
</dbReference>
<evidence type="ECO:0000250" key="1"/>
<evidence type="ECO:0000250" key="2">
    <source>
        <dbReference type="UniProtKB" id="P29340"/>
    </source>
</evidence>
<evidence type="ECO:0000255" key="3">
    <source>
        <dbReference type="PROSITE-ProRule" id="PRU00388"/>
    </source>
</evidence>
<evidence type="ECO:0000255" key="4">
    <source>
        <dbReference type="PROSITE-ProRule" id="PRU10133"/>
    </source>
</evidence>
<evidence type="ECO:0000269" key="5">
    <source>
    </source>
</evidence>
<evidence type="ECO:0000269" key="6">
    <source>
    </source>
</evidence>
<evidence type="ECO:0000269" key="7">
    <source>
    </source>
</evidence>
<evidence type="ECO:0007829" key="8">
    <source>
        <dbReference type="PDB" id="6XOD"/>
    </source>
</evidence>
<name>PEX4_ARATH</name>
<reference key="1">
    <citation type="journal article" date="2005" name="Plant Physiol.">
        <title>Genome analysis and functional characterization of the E2 and RING-type E3 ligase ubiquitination enzymes of Arabidopsis.</title>
        <authorList>
            <person name="Kraft E."/>
            <person name="Stone S.L."/>
            <person name="Ma L."/>
            <person name="Su N."/>
            <person name="Gao Y."/>
            <person name="Lau O.-S."/>
            <person name="Deng X.-W."/>
            <person name="Callis J."/>
        </authorList>
    </citation>
    <scope>NUCLEOTIDE SEQUENCE [MRNA]</scope>
    <scope>GENE FAMILY</scope>
    <scope>NOMENCLATURE</scope>
</reference>
<reference key="2">
    <citation type="journal article" date="2000" name="Nature">
        <title>Sequence and analysis of chromosome 5 of the plant Arabidopsis thaliana.</title>
        <authorList>
            <person name="Tabata S."/>
            <person name="Kaneko T."/>
            <person name="Nakamura Y."/>
            <person name="Kotani H."/>
            <person name="Kato T."/>
            <person name="Asamizu E."/>
            <person name="Miyajima N."/>
            <person name="Sasamoto S."/>
            <person name="Kimura T."/>
            <person name="Hosouchi T."/>
            <person name="Kawashima K."/>
            <person name="Kohara M."/>
            <person name="Matsumoto M."/>
            <person name="Matsuno A."/>
            <person name="Muraki A."/>
            <person name="Nakayama S."/>
            <person name="Nakazaki N."/>
            <person name="Naruo K."/>
            <person name="Okumura S."/>
            <person name="Shinpo S."/>
            <person name="Takeuchi C."/>
            <person name="Wada T."/>
            <person name="Watanabe A."/>
            <person name="Yamada M."/>
            <person name="Yasuda M."/>
            <person name="Sato S."/>
            <person name="de la Bastide M."/>
            <person name="Huang E."/>
            <person name="Spiegel L."/>
            <person name="Gnoj L."/>
            <person name="O'Shaughnessy A."/>
            <person name="Preston R."/>
            <person name="Habermann K."/>
            <person name="Murray J."/>
            <person name="Johnson D."/>
            <person name="Rohlfing T."/>
            <person name="Nelson J."/>
            <person name="Stoneking T."/>
            <person name="Pepin K."/>
            <person name="Spieth J."/>
            <person name="Sekhon M."/>
            <person name="Armstrong J."/>
            <person name="Becker M."/>
            <person name="Belter E."/>
            <person name="Cordum H."/>
            <person name="Cordes M."/>
            <person name="Courtney L."/>
            <person name="Courtney W."/>
            <person name="Dante M."/>
            <person name="Du H."/>
            <person name="Edwards J."/>
            <person name="Fryman J."/>
            <person name="Haakensen B."/>
            <person name="Lamar E."/>
            <person name="Latreille P."/>
            <person name="Leonard S."/>
            <person name="Meyer R."/>
            <person name="Mulvaney E."/>
            <person name="Ozersky P."/>
            <person name="Riley A."/>
            <person name="Strowmatt C."/>
            <person name="Wagner-McPherson C."/>
            <person name="Wollam A."/>
            <person name="Yoakum M."/>
            <person name="Bell M."/>
            <person name="Dedhia N."/>
            <person name="Parnell L."/>
            <person name="Shah R."/>
            <person name="Rodriguez M."/>
            <person name="Hoon See L."/>
            <person name="Vil D."/>
            <person name="Baker J."/>
            <person name="Kirchoff K."/>
            <person name="Toth K."/>
            <person name="King L."/>
            <person name="Bahret A."/>
            <person name="Miller B."/>
            <person name="Marra M.A."/>
            <person name="Martienssen R."/>
            <person name="McCombie W.R."/>
            <person name="Wilson R.K."/>
            <person name="Murphy G."/>
            <person name="Bancroft I."/>
            <person name="Volckaert G."/>
            <person name="Wambutt R."/>
            <person name="Duesterhoeft A."/>
            <person name="Stiekema W."/>
            <person name="Pohl T."/>
            <person name="Entian K.-D."/>
            <person name="Terryn N."/>
            <person name="Hartley N."/>
            <person name="Bent E."/>
            <person name="Johnson S."/>
            <person name="Langham S.-A."/>
            <person name="McCullagh B."/>
            <person name="Robben J."/>
            <person name="Grymonprez B."/>
            <person name="Zimmermann W."/>
            <person name="Ramsperger U."/>
            <person name="Wedler H."/>
            <person name="Balke K."/>
            <person name="Wedler E."/>
            <person name="Peters S."/>
            <person name="van Staveren M."/>
            <person name="Dirkse W."/>
            <person name="Mooijman P."/>
            <person name="Klein Lankhorst R."/>
            <person name="Weitzenegger T."/>
            <person name="Bothe G."/>
            <person name="Rose M."/>
            <person name="Hauf J."/>
            <person name="Berneiser S."/>
            <person name="Hempel S."/>
            <person name="Feldpausch M."/>
            <person name="Lamberth S."/>
            <person name="Villarroel R."/>
            <person name="Gielen J."/>
            <person name="Ardiles W."/>
            <person name="Bents O."/>
            <person name="Lemcke K."/>
            <person name="Kolesov G."/>
            <person name="Mayer K.F.X."/>
            <person name="Rudd S."/>
            <person name="Schoof H."/>
            <person name="Schueller C."/>
            <person name="Zaccaria P."/>
            <person name="Mewes H.-W."/>
            <person name="Bevan M."/>
            <person name="Fransz P.F."/>
        </authorList>
    </citation>
    <scope>NUCLEOTIDE SEQUENCE [LARGE SCALE GENOMIC DNA]</scope>
    <source>
        <strain>cv. Columbia</strain>
    </source>
</reference>
<reference key="3">
    <citation type="journal article" date="2017" name="Plant J.">
        <title>Araport11: a complete reannotation of the Arabidopsis thaliana reference genome.</title>
        <authorList>
            <person name="Cheng C.Y."/>
            <person name="Krishnakumar V."/>
            <person name="Chan A.P."/>
            <person name="Thibaud-Nissen F."/>
            <person name="Schobel S."/>
            <person name="Town C.D."/>
        </authorList>
    </citation>
    <scope>GENOME REANNOTATION</scope>
    <source>
        <strain>cv. Columbia</strain>
    </source>
</reference>
<reference key="4">
    <citation type="submission" date="2002-03" db="EMBL/GenBank/DDBJ databases">
        <title>Full-length cDNA from Arabidopsis thaliana.</title>
        <authorList>
            <person name="Brover V.V."/>
            <person name="Troukhan M.E."/>
            <person name="Alexandrov N.A."/>
            <person name="Lu Y.-P."/>
            <person name="Flavell R.B."/>
            <person name="Feldmann K.A."/>
        </authorList>
    </citation>
    <scope>NUCLEOTIDE SEQUENCE [LARGE SCALE MRNA]</scope>
</reference>
<reference key="5">
    <citation type="submission" date="2006-05" db="EMBL/GenBank/DDBJ databases">
        <title>Arabidopsis ORF clones.</title>
        <authorList>
            <person name="Quinitio C."/>
            <person name="Chen H."/>
            <person name="Kim C.J."/>
            <person name="Shinn P."/>
            <person name="Ecker J.R."/>
        </authorList>
    </citation>
    <scope>NUCLEOTIDE SEQUENCE [LARGE SCALE MRNA]</scope>
    <source>
        <strain>cv. Columbia</strain>
    </source>
</reference>
<reference key="6">
    <citation type="journal article" date="2005" name="Plant Cell">
        <title>Identification and functional characterization of Arabidopsis PEROXIN4 and the interacting protein PEROXIN22.</title>
        <authorList>
            <person name="Zolman B.K."/>
            <person name="Monroe-Augustus M."/>
            <person name="Silva I.D."/>
            <person name="Bartel B."/>
        </authorList>
    </citation>
    <scope>IDENTIFICATION</scope>
    <scope>MUTAGENESIS OF PRO-123</scope>
    <scope>INTERACTION WITH PEX22</scope>
</reference>
<reference key="7">
    <citation type="journal article" date="2007" name="Plant Cell Physiol.">
        <title>Functional classification of Arabidopsis peroxisome biogenesis factors proposed from analyses of knockdown mutants.</title>
        <authorList>
            <person name="Nito K."/>
            <person name="Kamigaki A."/>
            <person name="Kondo M."/>
            <person name="Hayashi M."/>
            <person name="Nishimura M."/>
        </authorList>
    </citation>
    <scope>FUNCTION</scope>
</reference>
<reference key="8">
    <citation type="journal article" date="2009" name="Proc. Natl. Acad. Sci. U.S.A.">
        <title>Peroxisome-associated matrix protein degradation in Arabidopsis.</title>
        <authorList>
            <person name="Lingard M.J."/>
            <person name="Monroe-Augustus M."/>
            <person name="Bartel B."/>
        </authorList>
    </citation>
    <scope>FUNCTION</scope>
</reference>
<gene>
    <name type="primary">PEX4</name>
    <name type="synonym">UBC21</name>
    <name type="ordered locus">At5g25760</name>
    <name type="ORF">F18A17.10</name>
</gene>
<sequence length="157" mass="17708">MQASRARLFKEYKEVQREKVADPDIQLICDDTNIFKWTALIKGPSETPYEGGVFQLAFSVPEPYPLQPPQVRFLTKIFHPNVHFKTGEICLDILKNAWSPAWTLQSVCRAIIALMAHPEPDSPLNCDSGNLLRSGDVRGFNSMAQMYTRLAAMPKKG</sequence>
<proteinExistence type="evidence at protein level"/>
<protein>
    <recommendedName>
        <fullName>Protein PEROXIN-4</fullName>
        <shortName>AtPEX4</shortName>
    </recommendedName>
    <alternativeName>
        <fullName>E2 ubiquitin-conjugating enzyme 21</fullName>
    </alternativeName>
    <alternativeName>
        <fullName>Probable ubiquitin-conjugating enzyme E2 21</fullName>
        <ecNumber>2.3.2.23</ecNumber>
    </alternativeName>
    <alternativeName>
        <fullName>Ubiquitin carrier protein 21</fullName>
    </alternativeName>
</protein>
<organism>
    <name type="scientific">Arabidopsis thaliana</name>
    <name type="common">Mouse-ear cress</name>
    <dbReference type="NCBI Taxonomy" id="3702"/>
    <lineage>
        <taxon>Eukaryota</taxon>
        <taxon>Viridiplantae</taxon>
        <taxon>Streptophyta</taxon>
        <taxon>Embryophyta</taxon>
        <taxon>Tracheophyta</taxon>
        <taxon>Spermatophyta</taxon>
        <taxon>Magnoliopsida</taxon>
        <taxon>eudicotyledons</taxon>
        <taxon>Gunneridae</taxon>
        <taxon>Pentapetalae</taxon>
        <taxon>rosids</taxon>
        <taxon>malvids</taxon>
        <taxon>Brassicales</taxon>
        <taxon>Brassicaceae</taxon>
        <taxon>Camelineae</taxon>
        <taxon>Arabidopsis</taxon>
    </lineage>
</organism>
<accession>Q8LGF7</accession>